<accession>A0DB19</accession>
<comment type="function">
    <text evidence="1">Positively regulates the activity of the minus-end directed microtubule motor protein dynein. May enhance dynein-mediated microtubule sliding by targeting dynein to the microtubule plus end. Required for several dynein- and microtubule-dependent processes.</text>
</comment>
<comment type="subcellular location">
    <subcellularLocation>
        <location evidence="1">Cytoplasm</location>
        <location evidence="1">Cytoskeleton</location>
    </subcellularLocation>
    <subcellularLocation>
        <location evidence="1">Cytoplasm</location>
        <location evidence="1">Cytoskeleton</location>
        <location evidence="1">Microtubule organizing center</location>
        <location evidence="1">Centrosome</location>
    </subcellularLocation>
    <text evidence="1">Localizes to the plus end of microtubules and to the centrosome.</text>
</comment>
<comment type="domain">
    <text evidence="1">Dimerization mediated by the LisH domain may be required to activate dynein.</text>
</comment>
<comment type="similarity">
    <text evidence="1">Belongs to the WD repeat LIS1/nudF family.</text>
</comment>
<name>LIS11_PARTE</name>
<dbReference type="EMBL" id="CT868363">
    <property type="protein sequence ID" value="CAK80236.1"/>
    <property type="molecule type" value="Genomic_DNA"/>
</dbReference>
<dbReference type="RefSeq" id="XP_001447633.1">
    <property type="nucleotide sequence ID" value="XM_001447596.1"/>
</dbReference>
<dbReference type="SMR" id="A0DB19"/>
<dbReference type="STRING" id="5888.A0DB19"/>
<dbReference type="EnsemblProtists" id="CAK80236">
    <property type="protein sequence ID" value="CAK80236"/>
    <property type="gene ID" value="GSPATT00015130001"/>
</dbReference>
<dbReference type="GeneID" id="5033432"/>
<dbReference type="KEGG" id="ptm:GSPATT00015130001"/>
<dbReference type="eggNOG" id="KOG0295">
    <property type="taxonomic scope" value="Eukaryota"/>
</dbReference>
<dbReference type="HOGENOM" id="CLU_000288_57_15_1"/>
<dbReference type="InParanoid" id="A0DB19"/>
<dbReference type="OMA" id="RGTCLMT"/>
<dbReference type="OrthoDB" id="674604at2759"/>
<dbReference type="Proteomes" id="UP000000600">
    <property type="component" value="Partially assembled WGS sequence"/>
</dbReference>
<dbReference type="GO" id="GO:0005813">
    <property type="term" value="C:centrosome"/>
    <property type="evidence" value="ECO:0007669"/>
    <property type="project" value="UniProtKB-SubCell"/>
</dbReference>
<dbReference type="GO" id="GO:0005737">
    <property type="term" value="C:cytoplasm"/>
    <property type="evidence" value="ECO:0007669"/>
    <property type="project" value="UniProtKB-UniRule"/>
</dbReference>
<dbReference type="GO" id="GO:0005874">
    <property type="term" value="C:microtubule"/>
    <property type="evidence" value="ECO:0007669"/>
    <property type="project" value="UniProtKB-KW"/>
</dbReference>
<dbReference type="GO" id="GO:0005875">
    <property type="term" value="C:microtubule associated complex"/>
    <property type="evidence" value="ECO:0007669"/>
    <property type="project" value="UniProtKB-UniRule"/>
</dbReference>
<dbReference type="GO" id="GO:0070840">
    <property type="term" value="F:dynein complex binding"/>
    <property type="evidence" value="ECO:0007669"/>
    <property type="project" value="UniProtKB-UniRule"/>
</dbReference>
<dbReference type="GO" id="GO:0051301">
    <property type="term" value="P:cell division"/>
    <property type="evidence" value="ECO:0007669"/>
    <property type="project" value="UniProtKB-KW"/>
</dbReference>
<dbReference type="GO" id="GO:0000132">
    <property type="term" value="P:establishment of mitotic spindle orientation"/>
    <property type="evidence" value="ECO:0007669"/>
    <property type="project" value="UniProtKB-UniRule"/>
</dbReference>
<dbReference type="GO" id="GO:0051012">
    <property type="term" value="P:microtubule sliding"/>
    <property type="evidence" value="ECO:0007669"/>
    <property type="project" value="UniProtKB-UniRule"/>
</dbReference>
<dbReference type="CDD" id="cd00200">
    <property type="entry name" value="WD40"/>
    <property type="match status" value="1"/>
</dbReference>
<dbReference type="Gene3D" id="1.20.960.30">
    <property type="match status" value="1"/>
</dbReference>
<dbReference type="Gene3D" id="2.130.10.10">
    <property type="entry name" value="YVTN repeat-like/Quinoprotein amine dehydrogenase"/>
    <property type="match status" value="1"/>
</dbReference>
<dbReference type="HAMAP" id="MF_03141">
    <property type="entry name" value="lis1"/>
    <property type="match status" value="1"/>
</dbReference>
<dbReference type="InterPro" id="IPR017252">
    <property type="entry name" value="Dynein_regulator_LIS1"/>
</dbReference>
<dbReference type="InterPro" id="IPR020472">
    <property type="entry name" value="G-protein_beta_WD-40_rep"/>
</dbReference>
<dbReference type="InterPro" id="IPR037190">
    <property type="entry name" value="LIS1_N"/>
</dbReference>
<dbReference type="InterPro" id="IPR006594">
    <property type="entry name" value="LisH"/>
</dbReference>
<dbReference type="InterPro" id="IPR015943">
    <property type="entry name" value="WD40/YVTN_repeat-like_dom_sf"/>
</dbReference>
<dbReference type="InterPro" id="IPR019775">
    <property type="entry name" value="WD40_repeat_CS"/>
</dbReference>
<dbReference type="InterPro" id="IPR036322">
    <property type="entry name" value="WD40_repeat_dom_sf"/>
</dbReference>
<dbReference type="InterPro" id="IPR001680">
    <property type="entry name" value="WD40_rpt"/>
</dbReference>
<dbReference type="PANTHER" id="PTHR19879">
    <property type="entry name" value="TRANSCRIPTION INITIATION FACTOR TFIID"/>
    <property type="match status" value="1"/>
</dbReference>
<dbReference type="PANTHER" id="PTHR19879:SF9">
    <property type="entry name" value="TRANSCRIPTION INITIATION FACTOR TFIID SUBUNIT 5"/>
    <property type="match status" value="1"/>
</dbReference>
<dbReference type="Pfam" id="PF00400">
    <property type="entry name" value="WD40"/>
    <property type="match status" value="5"/>
</dbReference>
<dbReference type="PIRSF" id="PIRSF037647">
    <property type="entry name" value="Dynein_regulator_Lis1"/>
    <property type="match status" value="1"/>
</dbReference>
<dbReference type="PRINTS" id="PR00320">
    <property type="entry name" value="GPROTEINBRPT"/>
</dbReference>
<dbReference type="SMART" id="SM00320">
    <property type="entry name" value="WD40"/>
    <property type="match status" value="7"/>
</dbReference>
<dbReference type="SUPFAM" id="SSF109925">
    <property type="entry name" value="Lissencephaly-1 protein (Lis-1, PAF-AH alpha) N-terminal domain"/>
    <property type="match status" value="1"/>
</dbReference>
<dbReference type="SUPFAM" id="SSF50978">
    <property type="entry name" value="WD40 repeat-like"/>
    <property type="match status" value="1"/>
</dbReference>
<dbReference type="PROSITE" id="PS50896">
    <property type="entry name" value="LISH"/>
    <property type="match status" value="1"/>
</dbReference>
<dbReference type="PROSITE" id="PS00678">
    <property type="entry name" value="WD_REPEATS_1"/>
    <property type="match status" value="4"/>
</dbReference>
<dbReference type="PROSITE" id="PS50082">
    <property type="entry name" value="WD_REPEATS_2"/>
    <property type="match status" value="5"/>
</dbReference>
<dbReference type="PROSITE" id="PS50294">
    <property type="entry name" value="WD_REPEATS_REGION"/>
    <property type="match status" value="1"/>
</dbReference>
<evidence type="ECO:0000255" key="1">
    <source>
        <dbReference type="HAMAP-Rule" id="MF_03141"/>
    </source>
</evidence>
<sequence length="403" mass="46072">MVLTARQRDELNQAIHQYLLISYQQSAQLFKTEAAVKDGQIEADLLEKKWNSIVRLSKRVITLEQQVEQLNEQLAQAQAGKIQFNKSDDEQRLTPIEKFKLEGHRAGVNCVAFHPQYQILGSASDDGSIKLWDYESGHFEKTLKGHTSNVNCLAFDPTGKYICSASSDLSIKIWELKNHTCVKTLIGHEHSVSTVQFSDHGDFILSASRDKNIKLWEVATGFCKKTFSEHQEWVRCAVFSNDEKQIASCSQDQMIYIWVIDSGQVLHQLSGHEHVVEQVKYIPEHGAKQILTQQQQQNIQTINLLVSVSRDKEIKIWNTILGTNLFTLSGHDNWVNGVSFHPDGVHMLSVSDDKTIRVWNLKEQKQKKKIENAHDKFILKCEINKFIFATCSVDQTIKLWLLS</sequence>
<keyword id="KW-0131">Cell cycle</keyword>
<keyword id="KW-0132">Cell division</keyword>
<keyword id="KW-0175">Coiled coil</keyword>
<keyword id="KW-0963">Cytoplasm</keyword>
<keyword id="KW-0206">Cytoskeleton</keyword>
<keyword id="KW-0493">Microtubule</keyword>
<keyword id="KW-0498">Mitosis</keyword>
<keyword id="KW-1185">Reference proteome</keyword>
<keyword id="KW-0677">Repeat</keyword>
<keyword id="KW-0813">Transport</keyword>
<keyword id="KW-0853">WD repeat</keyword>
<proteinExistence type="inferred from homology"/>
<protein>
    <recommendedName>
        <fullName evidence="1">Lissencephaly-1 homolog 1</fullName>
    </recommendedName>
</protein>
<reference key="1">
    <citation type="journal article" date="2006" name="Nature">
        <title>Global trends of whole-genome duplications revealed by the ciliate Paramecium tetraurelia.</title>
        <authorList>
            <person name="Aury J.-M."/>
            <person name="Jaillon O."/>
            <person name="Duret L."/>
            <person name="Noel B."/>
            <person name="Jubin C."/>
            <person name="Porcel B.M."/>
            <person name="Segurens B."/>
            <person name="Daubin V."/>
            <person name="Anthouard V."/>
            <person name="Aiach N."/>
            <person name="Arnaiz O."/>
            <person name="Billaut A."/>
            <person name="Beisson J."/>
            <person name="Blanc I."/>
            <person name="Bouhouche K."/>
            <person name="Camara F."/>
            <person name="Duharcourt S."/>
            <person name="Guigo R."/>
            <person name="Gogendeau D."/>
            <person name="Katinka M."/>
            <person name="Keller A.-M."/>
            <person name="Kissmehl R."/>
            <person name="Klotz C."/>
            <person name="Koll F."/>
            <person name="Le Mouel A."/>
            <person name="Lepere G."/>
            <person name="Malinsky S."/>
            <person name="Nowacki M."/>
            <person name="Nowak J.K."/>
            <person name="Plattner H."/>
            <person name="Poulain J."/>
            <person name="Ruiz F."/>
            <person name="Serrano V."/>
            <person name="Zagulski M."/>
            <person name="Dessen P."/>
            <person name="Betermier M."/>
            <person name="Weissenbach J."/>
            <person name="Scarpelli C."/>
            <person name="Schaechter V."/>
            <person name="Sperling L."/>
            <person name="Meyer E."/>
            <person name="Cohen J."/>
            <person name="Wincker P."/>
        </authorList>
    </citation>
    <scope>NUCLEOTIDE SEQUENCE [LARGE SCALE GENOMIC DNA]</scope>
    <source>
        <strain>Stock d4-2</strain>
    </source>
</reference>
<gene>
    <name type="ORF">GSPATT00015130001</name>
</gene>
<organism>
    <name type="scientific">Paramecium tetraurelia</name>
    <dbReference type="NCBI Taxonomy" id="5888"/>
    <lineage>
        <taxon>Eukaryota</taxon>
        <taxon>Sar</taxon>
        <taxon>Alveolata</taxon>
        <taxon>Ciliophora</taxon>
        <taxon>Intramacronucleata</taxon>
        <taxon>Oligohymenophorea</taxon>
        <taxon>Peniculida</taxon>
        <taxon>Parameciidae</taxon>
        <taxon>Paramecium</taxon>
    </lineage>
</organism>
<feature type="chain" id="PRO_0000405057" description="Lissencephaly-1 homolog 1">
    <location>
        <begin position="1"/>
        <end position="403"/>
    </location>
</feature>
<feature type="domain" description="LisH" evidence="1">
    <location>
        <begin position="7"/>
        <end position="38"/>
    </location>
</feature>
<feature type="repeat" description="WD 1">
    <location>
        <begin position="103"/>
        <end position="142"/>
    </location>
</feature>
<feature type="repeat" description="WD 2">
    <location>
        <begin position="145"/>
        <end position="184"/>
    </location>
</feature>
<feature type="repeat" description="WD 3">
    <location>
        <begin position="187"/>
        <end position="226"/>
    </location>
</feature>
<feature type="repeat" description="WD 4">
    <location>
        <begin position="229"/>
        <end position="270"/>
    </location>
</feature>
<feature type="repeat" description="WD 5">
    <location>
        <begin position="271"/>
        <end position="327"/>
    </location>
</feature>
<feature type="repeat" description="WD 6">
    <location>
        <begin position="330"/>
        <end position="369"/>
    </location>
</feature>
<feature type="repeat" description="WD 7">
    <location>
        <begin position="373"/>
        <end position="403"/>
    </location>
</feature>
<feature type="coiled-coil region" evidence="1">
    <location>
        <begin position="51"/>
        <end position="87"/>
    </location>
</feature>